<name>ORF12_SPV1R</name>
<comment type="subcellular location">
    <subcellularLocation>
        <location evidence="2">Host membrane</location>
        <topology evidence="2">Single-pass membrane protein</topology>
    </subcellularLocation>
</comment>
<comment type="similarity">
    <text evidence="2">Belongs to the plectrovirus ORF12 protein family.</text>
</comment>
<dbReference type="EMBL" id="X51344">
    <property type="protein sequence ID" value="CAA35730.1"/>
    <property type="molecule type" value="Genomic_DNA"/>
</dbReference>
<dbReference type="RefSeq" id="NP_040342.1">
    <property type="nucleotide sequence ID" value="NC_001365.1"/>
</dbReference>
<dbReference type="SMR" id="P15903"/>
<dbReference type="KEGG" id="vg:1260859"/>
<dbReference type="Proteomes" id="UP000001252">
    <property type="component" value="Segment"/>
</dbReference>
<dbReference type="GO" id="GO:0033644">
    <property type="term" value="C:host cell membrane"/>
    <property type="evidence" value="ECO:0007669"/>
    <property type="project" value="UniProtKB-SubCell"/>
</dbReference>
<dbReference type="GO" id="GO:0016020">
    <property type="term" value="C:membrane"/>
    <property type="evidence" value="ECO:0007669"/>
    <property type="project" value="UniProtKB-KW"/>
</dbReference>
<dbReference type="Pfam" id="PF11044">
    <property type="entry name" value="TMEMspv1-c74-12"/>
    <property type="match status" value="1"/>
</dbReference>
<reference key="1">
    <citation type="journal article" date="1990" name="Nucleic Acids Res.">
        <title>Complete nucleotide sequence of the genome of Spiroplasma citri virus SpV1-R8A2 B.</title>
        <authorList>
            <person name="Renaudin J."/>
            <person name="Aullo P."/>
            <person name="Vignault J.C."/>
            <person name="Bove J.M."/>
        </authorList>
    </citation>
    <scope>NUCLEOTIDE SEQUENCE [GENOMIC DNA]</scope>
</reference>
<proteinExistence type="inferred from homology"/>
<organism>
    <name type="scientific">Spiroplasma virus SpV1-R8A2 B</name>
    <name type="common">SpV1</name>
    <name type="synonym">Spiroplasma virus 1</name>
    <dbReference type="NCBI Taxonomy" id="10854"/>
    <lineage>
        <taxon>Viruses</taxon>
        <taxon>Monodnaviria</taxon>
        <taxon>Loebvirae</taxon>
        <taxon>Hofneiviricota</taxon>
        <taxon>Faserviricetes</taxon>
        <taxon>Tubulavirales</taxon>
        <taxon>Plectroviridae</taxon>
        <taxon>Vespertiliovirus</taxon>
        <taxon>Vespertiliovirus R8A2B</taxon>
    </lineage>
</organism>
<keyword id="KW-1043">Host membrane</keyword>
<keyword id="KW-0472">Membrane</keyword>
<keyword id="KW-1185">Reference proteome</keyword>
<keyword id="KW-0812">Transmembrane</keyword>
<keyword id="KW-1133">Transmembrane helix</keyword>
<sequence>MPTWLTTIFSVVIVLAIFLYFGLLIYQKIRQIRGKKKDKKEIERKESNK</sequence>
<organismHost>
    <name type="scientific">Spiroplasma citri</name>
    <dbReference type="NCBI Taxonomy" id="2133"/>
</organismHost>
<gene>
    <name type="ORF">ORF12</name>
</gene>
<accession>P15903</accession>
<evidence type="ECO:0000255" key="1"/>
<evidence type="ECO:0000305" key="2"/>
<protein>
    <recommendedName>
        <fullName>Uncharacterized protein ORF12</fullName>
    </recommendedName>
    <alternativeName>
        <fullName>Gene 12 protein</fullName>
    </alternativeName>
</protein>
<feature type="chain" id="PRO_0000065786" description="Uncharacterized protein ORF12">
    <location>
        <begin position="1"/>
        <end position="49"/>
    </location>
</feature>
<feature type="transmembrane region" description="Helical" evidence="1">
    <location>
        <begin position="5"/>
        <end position="25"/>
    </location>
</feature>